<keyword id="KW-0067">ATP-binding</keyword>
<keyword id="KW-0963">Cytoplasm</keyword>
<keyword id="KW-0436">Ligase</keyword>
<keyword id="KW-0460">Magnesium</keyword>
<keyword id="KW-0479">Metal-binding</keyword>
<keyword id="KW-0547">Nucleotide-binding</keyword>
<keyword id="KW-0658">Purine biosynthesis</keyword>
<keyword id="KW-1185">Reference proteome</keyword>
<sequence>MLKKQPLSPTDVRDSKVYRDWGLTDAEYQLLTDKVLQRLPNETETGLFSGMWSEHCSYKNSKPVLKKFWTQGEQVLEGPGEGAGIIDIGDGQAVVFKAESHNHPSAVEPYEGAATGVGGIIRDIFSMGARPIALLDSLRFGEPTDAHTKYLISQVVAGIGGYGNCIGIPTIGGDTVFDASYQKNPLVNAMCVGILDQADIQKGQATGIGNAVIYVGAKTGRDGINGASFASAEFNDANETQRSAVQVGDPFMEKLLMEACLEVIHEHRDVLIGIQDMGAAGLVSSSAEMASKAGSGLSLNLDLVPQRETGMTPFELMLSESQERMLLCVKAGAEAEIYQVFEKYGLDAVTIGKVTAGHQYQLFHHGKLVADVPVDALATKAPVYEREKKRPTRLNHQSHHQFMPRLVDATGTLKKMLQQPTIASKASLYGTYDSQVQTNTVVKPGSDAGVIRIRHTDKALAVTTDVNGRYLYLNPRVGGEIAVAEAARNIVASGGQPLGITDCLNYGNPEKPEQFYDLDESAMGIARACQLFNTPVISGNVSLNNESNGEAIYPTPMIGMVGLIKHQKDITTSDFKHAGDAVYVLGTTEADFNGSELQKMLTGTISGELFDFDLVTENRNQRLLLTAIQKGLVASAHDVSEGGLITTIAESCFPQNIGVELASDLPAANFFAETQSRFVISVTPAQQAAFESLMEPYVTYLGRTTATDRLHVQTADQAFDIKVSFAKQLWEGALPCLLK</sequence>
<name>PURL_LACPL</name>
<accession>Q88U25</accession>
<accession>F9URK0</accession>
<organism>
    <name type="scientific">Lactiplantibacillus plantarum (strain ATCC BAA-793 / NCIMB 8826 / WCFS1)</name>
    <name type="common">Lactobacillus plantarum</name>
    <dbReference type="NCBI Taxonomy" id="220668"/>
    <lineage>
        <taxon>Bacteria</taxon>
        <taxon>Bacillati</taxon>
        <taxon>Bacillota</taxon>
        <taxon>Bacilli</taxon>
        <taxon>Lactobacillales</taxon>
        <taxon>Lactobacillaceae</taxon>
        <taxon>Lactiplantibacillus</taxon>
    </lineage>
</organism>
<gene>
    <name evidence="1" type="primary">purL</name>
    <name type="ordered locus">lp_2724</name>
</gene>
<protein>
    <recommendedName>
        <fullName evidence="1">Phosphoribosylformylglycinamidine synthase subunit PurL</fullName>
        <shortName evidence="1">FGAM synthase</shortName>
        <ecNumber evidence="1">6.3.5.3</ecNumber>
    </recommendedName>
    <alternativeName>
        <fullName evidence="1">Formylglycinamide ribonucleotide amidotransferase subunit II</fullName>
        <shortName evidence="1">FGAR amidotransferase II</shortName>
        <shortName evidence="1">FGAR-AT II</shortName>
    </alternativeName>
    <alternativeName>
        <fullName evidence="1">Glutamine amidotransferase PurL</fullName>
    </alternativeName>
    <alternativeName>
        <fullName evidence="1">Phosphoribosylformylglycinamidine synthase subunit II</fullName>
    </alternativeName>
</protein>
<proteinExistence type="inferred from homology"/>
<comment type="function">
    <text evidence="1">Part of the phosphoribosylformylglycinamidine synthase complex involved in the purines biosynthetic pathway. Catalyzes the ATP-dependent conversion of formylglycinamide ribonucleotide (FGAR) and glutamine to yield formylglycinamidine ribonucleotide (FGAM) and glutamate. The FGAM synthase complex is composed of three subunits. PurQ produces an ammonia molecule by converting glutamine to glutamate. PurL transfers the ammonia molecule to FGAR to form FGAM in an ATP-dependent manner. PurS interacts with PurQ and PurL and is thought to assist in the transfer of the ammonia molecule from PurQ to PurL.</text>
</comment>
<comment type="catalytic activity">
    <reaction evidence="1">
        <text>N(2)-formyl-N(1)-(5-phospho-beta-D-ribosyl)glycinamide + L-glutamine + ATP + H2O = 2-formamido-N(1)-(5-O-phospho-beta-D-ribosyl)acetamidine + L-glutamate + ADP + phosphate + H(+)</text>
        <dbReference type="Rhea" id="RHEA:17129"/>
        <dbReference type="ChEBI" id="CHEBI:15377"/>
        <dbReference type="ChEBI" id="CHEBI:15378"/>
        <dbReference type="ChEBI" id="CHEBI:29985"/>
        <dbReference type="ChEBI" id="CHEBI:30616"/>
        <dbReference type="ChEBI" id="CHEBI:43474"/>
        <dbReference type="ChEBI" id="CHEBI:58359"/>
        <dbReference type="ChEBI" id="CHEBI:147286"/>
        <dbReference type="ChEBI" id="CHEBI:147287"/>
        <dbReference type="ChEBI" id="CHEBI:456216"/>
        <dbReference type="EC" id="6.3.5.3"/>
    </reaction>
</comment>
<comment type="pathway">
    <text evidence="1">Purine metabolism; IMP biosynthesis via de novo pathway; 5-amino-1-(5-phospho-D-ribosyl)imidazole from N(2)-formyl-N(1)-(5-phospho-D-ribosyl)glycinamide: step 1/2.</text>
</comment>
<comment type="subunit">
    <text evidence="1">Monomer. Part of the FGAM synthase complex composed of 1 PurL, 1 PurQ and 2 PurS subunits.</text>
</comment>
<comment type="subcellular location">
    <subcellularLocation>
        <location evidence="1">Cytoplasm</location>
    </subcellularLocation>
</comment>
<comment type="similarity">
    <text evidence="1">Belongs to the FGAMS family.</text>
</comment>
<dbReference type="EC" id="6.3.5.3" evidence="1"/>
<dbReference type="EMBL" id="AL935263">
    <property type="protein sequence ID" value="CCC79839.1"/>
    <property type="molecule type" value="Genomic_DNA"/>
</dbReference>
<dbReference type="RefSeq" id="WP_003645864.1">
    <property type="nucleotide sequence ID" value="NC_004567.2"/>
</dbReference>
<dbReference type="RefSeq" id="YP_004890353.1">
    <property type="nucleotide sequence ID" value="NC_004567.2"/>
</dbReference>
<dbReference type="SMR" id="Q88U25"/>
<dbReference type="STRING" id="220668.lp_2724"/>
<dbReference type="EnsemblBacteria" id="CCC79839">
    <property type="protein sequence ID" value="CCC79839"/>
    <property type="gene ID" value="lp_2724"/>
</dbReference>
<dbReference type="KEGG" id="lpl:lp_2724"/>
<dbReference type="PATRIC" id="fig|220668.9.peg.2279"/>
<dbReference type="eggNOG" id="COG0046">
    <property type="taxonomic scope" value="Bacteria"/>
</dbReference>
<dbReference type="HOGENOM" id="CLU_003100_0_1_9"/>
<dbReference type="OrthoDB" id="9804441at2"/>
<dbReference type="PhylomeDB" id="Q88U25"/>
<dbReference type="UniPathway" id="UPA00074">
    <property type="reaction ID" value="UER00128"/>
</dbReference>
<dbReference type="Proteomes" id="UP000000432">
    <property type="component" value="Chromosome"/>
</dbReference>
<dbReference type="GO" id="GO:0005737">
    <property type="term" value="C:cytoplasm"/>
    <property type="evidence" value="ECO:0007669"/>
    <property type="project" value="UniProtKB-SubCell"/>
</dbReference>
<dbReference type="GO" id="GO:0005524">
    <property type="term" value="F:ATP binding"/>
    <property type="evidence" value="ECO:0007669"/>
    <property type="project" value="UniProtKB-UniRule"/>
</dbReference>
<dbReference type="GO" id="GO:0000287">
    <property type="term" value="F:magnesium ion binding"/>
    <property type="evidence" value="ECO:0007669"/>
    <property type="project" value="UniProtKB-UniRule"/>
</dbReference>
<dbReference type="GO" id="GO:0004642">
    <property type="term" value="F:phosphoribosylformylglycinamidine synthase activity"/>
    <property type="evidence" value="ECO:0007669"/>
    <property type="project" value="UniProtKB-UniRule"/>
</dbReference>
<dbReference type="GO" id="GO:0006189">
    <property type="term" value="P:'de novo' IMP biosynthetic process"/>
    <property type="evidence" value="ECO:0007669"/>
    <property type="project" value="UniProtKB-UniRule"/>
</dbReference>
<dbReference type="CDD" id="cd02203">
    <property type="entry name" value="PurL_repeat1"/>
    <property type="match status" value="1"/>
</dbReference>
<dbReference type="CDD" id="cd02204">
    <property type="entry name" value="PurL_repeat2"/>
    <property type="match status" value="1"/>
</dbReference>
<dbReference type="FunFam" id="3.30.1330.10:FF:000004">
    <property type="entry name" value="Phosphoribosylformylglycinamidine synthase subunit PurL"/>
    <property type="match status" value="1"/>
</dbReference>
<dbReference type="Gene3D" id="3.90.650.10">
    <property type="entry name" value="PurM-like C-terminal domain"/>
    <property type="match status" value="2"/>
</dbReference>
<dbReference type="Gene3D" id="3.30.1330.10">
    <property type="entry name" value="PurM-like, N-terminal domain"/>
    <property type="match status" value="2"/>
</dbReference>
<dbReference type="HAMAP" id="MF_00420">
    <property type="entry name" value="PurL_2"/>
    <property type="match status" value="1"/>
</dbReference>
<dbReference type="InterPro" id="IPR010074">
    <property type="entry name" value="PRibForGlyAmidine_synth_PurL"/>
</dbReference>
<dbReference type="InterPro" id="IPR041609">
    <property type="entry name" value="PurL_linker"/>
</dbReference>
<dbReference type="InterPro" id="IPR010918">
    <property type="entry name" value="PurM-like_C_dom"/>
</dbReference>
<dbReference type="InterPro" id="IPR036676">
    <property type="entry name" value="PurM-like_C_sf"/>
</dbReference>
<dbReference type="InterPro" id="IPR016188">
    <property type="entry name" value="PurM-like_N"/>
</dbReference>
<dbReference type="InterPro" id="IPR036921">
    <property type="entry name" value="PurM-like_N_sf"/>
</dbReference>
<dbReference type="NCBIfam" id="TIGR01736">
    <property type="entry name" value="FGAM_synth_II"/>
    <property type="match status" value="1"/>
</dbReference>
<dbReference type="NCBIfam" id="NF002290">
    <property type="entry name" value="PRK01213.1"/>
    <property type="match status" value="1"/>
</dbReference>
<dbReference type="PANTHER" id="PTHR43555">
    <property type="entry name" value="PHOSPHORIBOSYLFORMYLGLYCINAMIDINE SYNTHASE SUBUNIT PURL"/>
    <property type="match status" value="1"/>
</dbReference>
<dbReference type="PANTHER" id="PTHR43555:SF1">
    <property type="entry name" value="PHOSPHORIBOSYLFORMYLGLYCINAMIDINE SYNTHASE SUBUNIT PURL"/>
    <property type="match status" value="1"/>
</dbReference>
<dbReference type="Pfam" id="PF00586">
    <property type="entry name" value="AIRS"/>
    <property type="match status" value="2"/>
</dbReference>
<dbReference type="Pfam" id="PF02769">
    <property type="entry name" value="AIRS_C"/>
    <property type="match status" value="2"/>
</dbReference>
<dbReference type="Pfam" id="PF18072">
    <property type="entry name" value="FGAR-AT_linker"/>
    <property type="match status" value="1"/>
</dbReference>
<dbReference type="PIRSF" id="PIRSF001587">
    <property type="entry name" value="FGAM_synthase_II"/>
    <property type="match status" value="1"/>
</dbReference>
<dbReference type="SUPFAM" id="SSF109736">
    <property type="entry name" value="FGAM synthase PurL, linker domain"/>
    <property type="match status" value="1"/>
</dbReference>
<dbReference type="SUPFAM" id="SSF56042">
    <property type="entry name" value="PurM C-terminal domain-like"/>
    <property type="match status" value="2"/>
</dbReference>
<dbReference type="SUPFAM" id="SSF55326">
    <property type="entry name" value="PurM N-terminal domain-like"/>
    <property type="match status" value="2"/>
</dbReference>
<reference key="1">
    <citation type="journal article" date="2003" name="Proc. Natl. Acad. Sci. U.S.A.">
        <title>Complete genome sequence of Lactobacillus plantarum WCFS1.</title>
        <authorList>
            <person name="Kleerebezem M."/>
            <person name="Boekhorst J."/>
            <person name="van Kranenburg R."/>
            <person name="Molenaar D."/>
            <person name="Kuipers O.P."/>
            <person name="Leer R."/>
            <person name="Tarchini R."/>
            <person name="Peters S.A."/>
            <person name="Sandbrink H.M."/>
            <person name="Fiers M.W.E.J."/>
            <person name="Stiekema W."/>
            <person name="Klein Lankhorst R.M."/>
            <person name="Bron P.A."/>
            <person name="Hoffer S.M."/>
            <person name="Nierop Groot M.N."/>
            <person name="Kerkhoven R."/>
            <person name="De Vries M."/>
            <person name="Ursing B."/>
            <person name="De Vos W.M."/>
            <person name="Siezen R.J."/>
        </authorList>
    </citation>
    <scope>NUCLEOTIDE SEQUENCE [LARGE SCALE GENOMIC DNA]</scope>
    <source>
        <strain>ATCC BAA-793 / NCIMB 8826 / WCFS1</strain>
    </source>
</reference>
<reference key="2">
    <citation type="journal article" date="2012" name="J. Bacteriol.">
        <title>Complete resequencing and reannotation of the Lactobacillus plantarum WCFS1 genome.</title>
        <authorList>
            <person name="Siezen R.J."/>
            <person name="Francke C."/>
            <person name="Renckens B."/>
            <person name="Boekhorst J."/>
            <person name="Wels M."/>
            <person name="Kleerebezem M."/>
            <person name="van Hijum S.A."/>
        </authorList>
    </citation>
    <scope>NUCLEOTIDE SEQUENCE [LARGE SCALE GENOMIC DNA]</scope>
    <scope>GENOME REANNOTATION</scope>
    <source>
        <strain>ATCC BAA-793 / NCIMB 8826 / WCFS1</strain>
    </source>
</reference>
<evidence type="ECO:0000255" key="1">
    <source>
        <dbReference type="HAMAP-Rule" id="MF_00420"/>
    </source>
</evidence>
<feature type="chain" id="PRO_0000100463" description="Phosphoribosylformylglycinamidine synthase subunit PurL">
    <location>
        <begin position="1"/>
        <end position="739"/>
    </location>
</feature>
<feature type="active site" evidence="1">
    <location>
        <position position="55"/>
    </location>
</feature>
<feature type="active site" description="Proton acceptor" evidence="1">
    <location>
        <position position="101"/>
    </location>
</feature>
<feature type="binding site" evidence="1">
    <location>
        <position position="58"/>
    </location>
    <ligand>
        <name>ATP</name>
        <dbReference type="ChEBI" id="CHEBI:30616"/>
    </ligand>
</feature>
<feature type="binding site" evidence="1">
    <location>
        <position position="97"/>
    </location>
    <ligand>
        <name>ATP</name>
        <dbReference type="ChEBI" id="CHEBI:30616"/>
    </ligand>
</feature>
<feature type="binding site" evidence="1">
    <location>
        <position position="99"/>
    </location>
    <ligand>
        <name>Mg(2+)</name>
        <dbReference type="ChEBI" id="CHEBI:18420"/>
        <label>1</label>
    </ligand>
</feature>
<feature type="binding site" evidence="1">
    <location>
        <begin position="100"/>
        <end position="103"/>
    </location>
    <ligand>
        <name>substrate</name>
    </ligand>
</feature>
<feature type="binding site" evidence="1">
    <location>
        <position position="122"/>
    </location>
    <ligand>
        <name>substrate</name>
    </ligand>
</feature>
<feature type="binding site" evidence="1">
    <location>
        <position position="123"/>
    </location>
    <ligand>
        <name>Mg(2+)</name>
        <dbReference type="ChEBI" id="CHEBI:18420"/>
        <label>2</label>
    </ligand>
</feature>
<feature type="binding site" evidence="1">
    <location>
        <position position="246"/>
    </location>
    <ligand>
        <name>substrate</name>
    </ligand>
</feature>
<feature type="binding site" evidence="1">
    <location>
        <position position="276"/>
    </location>
    <ligand>
        <name>Mg(2+)</name>
        <dbReference type="ChEBI" id="CHEBI:18420"/>
        <label>2</label>
    </ligand>
</feature>
<feature type="binding site" evidence="1">
    <location>
        <begin position="320"/>
        <end position="322"/>
    </location>
    <ligand>
        <name>substrate</name>
    </ligand>
</feature>
<feature type="binding site" evidence="1">
    <location>
        <position position="502"/>
    </location>
    <ligand>
        <name>ATP</name>
        <dbReference type="ChEBI" id="CHEBI:30616"/>
    </ligand>
</feature>
<feature type="binding site" evidence="1">
    <location>
        <position position="539"/>
    </location>
    <ligand>
        <name>ATP</name>
        <dbReference type="ChEBI" id="CHEBI:30616"/>
    </ligand>
</feature>
<feature type="binding site" evidence="1">
    <location>
        <position position="540"/>
    </location>
    <ligand>
        <name>Mg(2+)</name>
        <dbReference type="ChEBI" id="CHEBI:18420"/>
        <label>1</label>
    </ligand>
</feature>
<feature type="binding site" evidence="1">
    <location>
        <position position="542"/>
    </location>
    <ligand>
        <name>substrate</name>
    </ligand>
</feature>